<sequence>MSNRKYFGTDGIRGRVGDAPITPEFVLKLGWAAGKVLARHGSRKIIIGKDTRISGYMLESALEAGLSAAGLSASFTGPMPTPAVAYLTRTFRAEAGIVISASHNPFYDNGIKFFSIDGTKLPDEVEEAIEAEMEKELTCVDSSELGKASRIVDAAGRYIEFCKGTFPNELSLSHLKIVVDCANGATYHIAPNVFRELGAKVIAIGCEPDGLNINEEVGATDVRALQARVLAEKADLGIAFDGDGDRVIMVDHEGNKVDGDQILYIIAREGLRQGQLRGGAVGTLMSNMGLELALKQLGIPFARAKVGDRYVLEKLQEKGWRIGAENSGHVILLDKTTTGDGIVASLQVVAAMVRNHMNLHDLCSGMKMFPQILVNVRFTAGKGDPLENENVKAVMAEVEAALGNRGRVLLRKSGTEPLIRVMVEGEEEAQVTEFAHRIADAVKAA</sequence>
<comment type="function">
    <text evidence="1">Catalyzes the conversion of glucosamine-6-phosphate to glucosamine-1-phosphate.</text>
</comment>
<comment type="catalytic activity">
    <reaction evidence="1">
        <text>alpha-D-glucosamine 1-phosphate = D-glucosamine 6-phosphate</text>
        <dbReference type="Rhea" id="RHEA:23424"/>
        <dbReference type="ChEBI" id="CHEBI:58516"/>
        <dbReference type="ChEBI" id="CHEBI:58725"/>
        <dbReference type="EC" id="5.4.2.10"/>
    </reaction>
</comment>
<comment type="cofactor">
    <cofactor evidence="1">
        <name>Mg(2+)</name>
        <dbReference type="ChEBI" id="CHEBI:18420"/>
    </cofactor>
    <text evidence="1">Binds 1 Mg(2+) ion per subunit.</text>
</comment>
<comment type="PTM">
    <text evidence="1">Activated by phosphorylation.</text>
</comment>
<comment type="similarity">
    <text evidence="1">Belongs to the phosphohexose mutase family.</text>
</comment>
<feature type="chain" id="PRO_1000068905" description="Phosphoglucosamine mutase">
    <location>
        <begin position="1"/>
        <end position="445"/>
    </location>
</feature>
<feature type="active site" description="Phosphoserine intermediate" evidence="1">
    <location>
        <position position="102"/>
    </location>
</feature>
<feature type="binding site" description="via phosphate group" evidence="1">
    <location>
        <position position="102"/>
    </location>
    <ligand>
        <name>Mg(2+)</name>
        <dbReference type="ChEBI" id="CHEBI:18420"/>
    </ligand>
</feature>
<feature type="binding site" evidence="1">
    <location>
        <position position="241"/>
    </location>
    <ligand>
        <name>Mg(2+)</name>
        <dbReference type="ChEBI" id="CHEBI:18420"/>
    </ligand>
</feature>
<feature type="binding site" evidence="1">
    <location>
        <position position="243"/>
    </location>
    <ligand>
        <name>Mg(2+)</name>
        <dbReference type="ChEBI" id="CHEBI:18420"/>
    </ligand>
</feature>
<feature type="binding site" evidence="1">
    <location>
        <position position="245"/>
    </location>
    <ligand>
        <name>Mg(2+)</name>
        <dbReference type="ChEBI" id="CHEBI:18420"/>
    </ligand>
</feature>
<feature type="modified residue" description="Phosphoserine" evidence="1">
    <location>
        <position position="102"/>
    </location>
</feature>
<dbReference type="EC" id="5.4.2.10" evidence="1"/>
<dbReference type="EMBL" id="CP000653">
    <property type="protein sequence ID" value="ABP62267.1"/>
    <property type="molecule type" value="Genomic_DNA"/>
</dbReference>
<dbReference type="RefSeq" id="WP_015960592.1">
    <property type="nucleotide sequence ID" value="NC_009436.1"/>
</dbReference>
<dbReference type="SMR" id="A4WEY7"/>
<dbReference type="STRING" id="399742.Ent638_3610"/>
<dbReference type="KEGG" id="ent:Ent638_3610"/>
<dbReference type="eggNOG" id="COG1109">
    <property type="taxonomic scope" value="Bacteria"/>
</dbReference>
<dbReference type="HOGENOM" id="CLU_016950_7_0_6"/>
<dbReference type="OrthoDB" id="9803322at2"/>
<dbReference type="Proteomes" id="UP000000230">
    <property type="component" value="Chromosome"/>
</dbReference>
<dbReference type="GO" id="GO:0005829">
    <property type="term" value="C:cytosol"/>
    <property type="evidence" value="ECO:0007669"/>
    <property type="project" value="TreeGrafter"/>
</dbReference>
<dbReference type="GO" id="GO:0000287">
    <property type="term" value="F:magnesium ion binding"/>
    <property type="evidence" value="ECO:0007669"/>
    <property type="project" value="UniProtKB-UniRule"/>
</dbReference>
<dbReference type="GO" id="GO:0008966">
    <property type="term" value="F:phosphoglucosamine mutase activity"/>
    <property type="evidence" value="ECO:0007669"/>
    <property type="project" value="UniProtKB-UniRule"/>
</dbReference>
<dbReference type="GO" id="GO:0004615">
    <property type="term" value="F:phosphomannomutase activity"/>
    <property type="evidence" value="ECO:0007669"/>
    <property type="project" value="TreeGrafter"/>
</dbReference>
<dbReference type="GO" id="GO:0005975">
    <property type="term" value="P:carbohydrate metabolic process"/>
    <property type="evidence" value="ECO:0007669"/>
    <property type="project" value="InterPro"/>
</dbReference>
<dbReference type="GO" id="GO:0009252">
    <property type="term" value="P:peptidoglycan biosynthetic process"/>
    <property type="evidence" value="ECO:0007669"/>
    <property type="project" value="TreeGrafter"/>
</dbReference>
<dbReference type="GO" id="GO:0006048">
    <property type="term" value="P:UDP-N-acetylglucosamine biosynthetic process"/>
    <property type="evidence" value="ECO:0007669"/>
    <property type="project" value="TreeGrafter"/>
</dbReference>
<dbReference type="CDD" id="cd05802">
    <property type="entry name" value="GlmM"/>
    <property type="match status" value="1"/>
</dbReference>
<dbReference type="FunFam" id="3.30.310.50:FF:000001">
    <property type="entry name" value="Phosphoglucosamine mutase"/>
    <property type="match status" value="1"/>
</dbReference>
<dbReference type="FunFam" id="3.40.120.10:FF:000001">
    <property type="entry name" value="Phosphoglucosamine mutase"/>
    <property type="match status" value="1"/>
</dbReference>
<dbReference type="FunFam" id="3.40.120.10:FF:000003">
    <property type="entry name" value="Phosphoglucosamine mutase"/>
    <property type="match status" value="1"/>
</dbReference>
<dbReference type="Gene3D" id="3.40.120.10">
    <property type="entry name" value="Alpha-D-Glucose-1,6-Bisphosphate, subunit A, domain 3"/>
    <property type="match status" value="3"/>
</dbReference>
<dbReference type="Gene3D" id="3.30.310.50">
    <property type="entry name" value="Alpha-D-phosphohexomutase, C-terminal domain"/>
    <property type="match status" value="1"/>
</dbReference>
<dbReference type="HAMAP" id="MF_01554_B">
    <property type="entry name" value="GlmM_B"/>
    <property type="match status" value="1"/>
</dbReference>
<dbReference type="InterPro" id="IPR005844">
    <property type="entry name" value="A-D-PHexomutase_a/b/a-I"/>
</dbReference>
<dbReference type="InterPro" id="IPR016055">
    <property type="entry name" value="A-D-PHexomutase_a/b/a-I/II/III"/>
</dbReference>
<dbReference type="InterPro" id="IPR005845">
    <property type="entry name" value="A-D-PHexomutase_a/b/a-II"/>
</dbReference>
<dbReference type="InterPro" id="IPR005846">
    <property type="entry name" value="A-D-PHexomutase_a/b/a-III"/>
</dbReference>
<dbReference type="InterPro" id="IPR005843">
    <property type="entry name" value="A-D-PHexomutase_C"/>
</dbReference>
<dbReference type="InterPro" id="IPR036900">
    <property type="entry name" value="A-D-PHexomutase_C_sf"/>
</dbReference>
<dbReference type="InterPro" id="IPR016066">
    <property type="entry name" value="A-D-PHexomutase_CS"/>
</dbReference>
<dbReference type="InterPro" id="IPR005841">
    <property type="entry name" value="Alpha-D-phosphohexomutase_SF"/>
</dbReference>
<dbReference type="InterPro" id="IPR006352">
    <property type="entry name" value="GlmM_bact"/>
</dbReference>
<dbReference type="InterPro" id="IPR050060">
    <property type="entry name" value="Phosphoglucosamine_mutase"/>
</dbReference>
<dbReference type="NCBIfam" id="TIGR01455">
    <property type="entry name" value="glmM"/>
    <property type="match status" value="1"/>
</dbReference>
<dbReference type="NCBIfam" id="NF008139">
    <property type="entry name" value="PRK10887.1"/>
    <property type="match status" value="1"/>
</dbReference>
<dbReference type="PANTHER" id="PTHR42946:SF1">
    <property type="entry name" value="PHOSPHOGLUCOMUTASE (ALPHA-D-GLUCOSE-1,6-BISPHOSPHATE-DEPENDENT)"/>
    <property type="match status" value="1"/>
</dbReference>
<dbReference type="PANTHER" id="PTHR42946">
    <property type="entry name" value="PHOSPHOHEXOSE MUTASE"/>
    <property type="match status" value="1"/>
</dbReference>
<dbReference type="Pfam" id="PF02878">
    <property type="entry name" value="PGM_PMM_I"/>
    <property type="match status" value="1"/>
</dbReference>
<dbReference type="Pfam" id="PF02879">
    <property type="entry name" value="PGM_PMM_II"/>
    <property type="match status" value="1"/>
</dbReference>
<dbReference type="Pfam" id="PF02880">
    <property type="entry name" value="PGM_PMM_III"/>
    <property type="match status" value="1"/>
</dbReference>
<dbReference type="Pfam" id="PF00408">
    <property type="entry name" value="PGM_PMM_IV"/>
    <property type="match status" value="1"/>
</dbReference>
<dbReference type="PRINTS" id="PR00509">
    <property type="entry name" value="PGMPMM"/>
</dbReference>
<dbReference type="SUPFAM" id="SSF55957">
    <property type="entry name" value="Phosphoglucomutase, C-terminal domain"/>
    <property type="match status" value="1"/>
</dbReference>
<dbReference type="SUPFAM" id="SSF53738">
    <property type="entry name" value="Phosphoglucomutase, first 3 domains"/>
    <property type="match status" value="3"/>
</dbReference>
<dbReference type="PROSITE" id="PS00710">
    <property type="entry name" value="PGM_PMM"/>
    <property type="match status" value="1"/>
</dbReference>
<gene>
    <name evidence="1" type="primary">glmM</name>
    <name type="ordered locus">Ent638_3610</name>
</gene>
<protein>
    <recommendedName>
        <fullName evidence="1">Phosphoglucosamine mutase</fullName>
        <ecNumber evidence="1">5.4.2.10</ecNumber>
    </recommendedName>
</protein>
<proteinExistence type="inferred from homology"/>
<evidence type="ECO:0000255" key="1">
    <source>
        <dbReference type="HAMAP-Rule" id="MF_01554"/>
    </source>
</evidence>
<name>GLMM_ENT38</name>
<reference key="1">
    <citation type="journal article" date="2010" name="PLoS Genet.">
        <title>Genome sequence of the plant growth promoting endophytic bacterium Enterobacter sp. 638.</title>
        <authorList>
            <person name="Taghavi S."/>
            <person name="van der Lelie D."/>
            <person name="Hoffman A."/>
            <person name="Zhang Y.B."/>
            <person name="Walla M.D."/>
            <person name="Vangronsveld J."/>
            <person name="Newman L."/>
            <person name="Monchy S."/>
        </authorList>
    </citation>
    <scope>NUCLEOTIDE SEQUENCE [LARGE SCALE GENOMIC DNA]</scope>
    <source>
        <strain>638</strain>
    </source>
</reference>
<organism>
    <name type="scientific">Enterobacter sp. (strain 638)</name>
    <dbReference type="NCBI Taxonomy" id="399742"/>
    <lineage>
        <taxon>Bacteria</taxon>
        <taxon>Pseudomonadati</taxon>
        <taxon>Pseudomonadota</taxon>
        <taxon>Gammaproteobacteria</taxon>
        <taxon>Enterobacterales</taxon>
        <taxon>Enterobacteriaceae</taxon>
        <taxon>Enterobacter</taxon>
    </lineage>
</organism>
<keyword id="KW-0413">Isomerase</keyword>
<keyword id="KW-0460">Magnesium</keyword>
<keyword id="KW-0479">Metal-binding</keyword>
<keyword id="KW-0597">Phosphoprotein</keyword>
<accession>A4WEY7</accession>